<accession>P36939</accession>
<proteinExistence type="inferred from homology"/>
<dbReference type="EMBL" id="M59233">
    <property type="protein sequence ID" value="AAA40596.1"/>
    <property type="molecule type" value="Genomic_DNA"/>
</dbReference>
<dbReference type="PIR" id="I54490">
    <property type="entry name" value="I54490"/>
</dbReference>
<dbReference type="SMR" id="P36939"/>
<dbReference type="GlyCosmos" id="P36939">
    <property type="glycosylation" value="2 sites, No reported glycans"/>
</dbReference>
<dbReference type="GO" id="GO:0009986">
    <property type="term" value="C:cell surface"/>
    <property type="evidence" value="ECO:0007669"/>
    <property type="project" value="TreeGrafter"/>
</dbReference>
<dbReference type="GO" id="GO:0005615">
    <property type="term" value="C:extracellular space"/>
    <property type="evidence" value="ECO:0007669"/>
    <property type="project" value="UniProtKB-KW"/>
</dbReference>
<dbReference type="GO" id="GO:0005886">
    <property type="term" value="C:plasma membrane"/>
    <property type="evidence" value="ECO:0007669"/>
    <property type="project" value="UniProtKB-SubCell"/>
</dbReference>
<dbReference type="GO" id="GO:0005125">
    <property type="term" value="F:cytokine activity"/>
    <property type="evidence" value="ECO:0007669"/>
    <property type="project" value="UniProtKB-KW"/>
</dbReference>
<dbReference type="GO" id="GO:0005164">
    <property type="term" value="F:tumor necrosis factor receptor binding"/>
    <property type="evidence" value="ECO:0007669"/>
    <property type="project" value="InterPro"/>
</dbReference>
<dbReference type="GO" id="GO:0008625">
    <property type="term" value="P:extrinsic apoptotic signaling pathway via death domain receptors"/>
    <property type="evidence" value="ECO:0007669"/>
    <property type="project" value="TreeGrafter"/>
</dbReference>
<dbReference type="GO" id="GO:0006955">
    <property type="term" value="P:immune response"/>
    <property type="evidence" value="ECO:0007669"/>
    <property type="project" value="InterPro"/>
</dbReference>
<dbReference type="GO" id="GO:0097527">
    <property type="term" value="P:necroptotic signaling pathway"/>
    <property type="evidence" value="ECO:0000250"/>
    <property type="project" value="CAFA"/>
</dbReference>
<dbReference type="GO" id="GO:0043123">
    <property type="term" value="P:positive regulation of canonical NF-kappaB signal transduction"/>
    <property type="evidence" value="ECO:0007669"/>
    <property type="project" value="TreeGrafter"/>
</dbReference>
<dbReference type="GO" id="GO:2001238">
    <property type="term" value="P:positive regulation of extrinsic apoptotic signaling pathway"/>
    <property type="evidence" value="ECO:0007669"/>
    <property type="project" value="TreeGrafter"/>
</dbReference>
<dbReference type="GO" id="GO:0051092">
    <property type="term" value="P:positive regulation of NF-kappaB transcription factor activity"/>
    <property type="evidence" value="ECO:0000250"/>
    <property type="project" value="UniProtKB"/>
</dbReference>
<dbReference type="GO" id="GO:0045944">
    <property type="term" value="P:positive regulation of transcription by RNA polymerase II"/>
    <property type="evidence" value="ECO:0007669"/>
    <property type="project" value="TreeGrafter"/>
</dbReference>
<dbReference type="GO" id="GO:0065008">
    <property type="term" value="P:regulation of biological quality"/>
    <property type="evidence" value="ECO:0007669"/>
    <property type="project" value="UniProtKB-ARBA"/>
</dbReference>
<dbReference type="GO" id="GO:0050793">
    <property type="term" value="P:regulation of developmental process"/>
    <property type="evidence" value="ECO:0007669"/>
    <property type="project" value="UniProtKB-ARBA"/>
</dbReference>
<dbReference type="GO" id="GO:0051239">
    <property type="term" value="P:regulation of multicellular organismal process"/>
    <property type="evidence" value="ECO:0007669"/>
    <property type="project" value="UniProtKB-ARBA"/>
</dbReference>
<dbReference type="GO" id="GO:0051046">
    <property type="term" value="P:regulation of secretion"/>
    <property type="evidence" value="ECO:0007669"/>
    <property type="project" value="UniProtKB-ARBA"/>
</dbReference>
<dbReference type="GO" id="GO:0033209">
    <property type="term" value="P:tumor necrosis factor-mediated signaling pathway"/>
    <property type="evidence" value="ECO:0007669"/>
    <property type="project" value="TreeGrafter"/>
</dbReference>
<dbReference type="GO" id="GO:0010573">
    <property type="term" value="P:vascular endothelial growth factor production"/>
    <property type="evidence" value="ECO:0000250"/>
    <property type="project" value="UniProtKB"/>
</dbReference>
<dbReference type="CDD" id="cd00184">
    <property type="entry name" value="TNF"/>
    <property type="match status" value="1"/>
</dbReference>
<dbReference type="FunFam" id="2.60.120.40:FF:000007">
    <property type="entry name" value="Tumor necrosis factor"/>
    <property type="match status" value="1"/>
</dbReference>
<dbReference type="Gene3D" id="2.60.120.40">
    <property type="match status" value="1"/>
</dbReference>
<dbReference type="InterPro" id="IPR006053">
    <property type="entry name" value="TNF"/>
</dbReference>
<dbReference type="InterPro" id="IPR002959">
    <property type="entry name" value="TNF_alpha"/>
</dbReference>
<dbReference type="InterPro" id="IPR021184">
    <property type="entry name" value="TNF_CS"/>
</dbReference>
<dbReference type="InterPro" id="IPR006052">
    <property type="entry name" value="TNF_dom"/>
</dbReference>
<dbReference type="InterPro" id="IPR008983">
    <property type="entry name" value="Tumour_necrosis_fac-like_dom"/>
</dbReference>
<dbReference type="PANTHER" id="PTHR11471:SF23">
    <property type="entry name" value="TUMOR NECROSIS FACTOR"/>
    <property type="match status" value="1"/>
</dbReference>
<dbReference type="PANTHER" id="PTHR11471">
    <property type="entry name" value="TUMOR NECROSIS FACTOR FAMILY MEMBER"/>
    <property type="match status" value="1"/>
</dbReference>
<dbReference type="Pfam" id="PF00229">
    <property type="entry name" value="TNF"/>
    <property type="match status" value="1"/>
</dbReference>
<dbReference type="PRINTS" id="PR01234">
    <property type="entry name" value="TNECROSISFCT"/>
</dbReference>
<dbReference type="PRINTS" id="PR01235">
    <property type="entry name" value="TNFALPHA"/>
</dbReference>
<dbReference type="SMART" id="SM00207">
    <property type="entry name" value="TNF"/>
    <property type="match status" value="1"/>
</dbReference>
<dbReference type="SUPFAM" id="SSF49842">
    <property type="entry name" value="TNF-like"/>
    <property type="match status" value="1"/>
</dbReference>
<dbReference type="PROSITE" id="PS00251">
    <property type="entry name" value="THD_1"/>
    <property type="match status" value="1"/>
</dbReference>
<dbReference type="PROSITE" id="PS50049">
    <property type="entry name" value="THD_2"/>
    <property type="match status" value="1"/>
</dbReference>
<gene>
    <name type="primary">TNF</name>
    <name type="synonym">TNFA</name>
    <name type="synonym">TNFSF2</name>
</gene>
<organism>
    <name type="scientific">Peromyscus leucopus</name>
    <name type="common">White-footed mouse</name>
    <dbReference type="NCBI Taxonomy" id="10041"/>
    <lineage>
        <taxon>Eukaryota</taxon>
        <taxon>Metazoa</taxon>
        <taxon>Chordata</taxon>
        <taxon>Craniata</taxon>
        <taxon>Vertebrata</taxon>
        <taxon>Euteleostomi</taxon>
        <taxon>Mammalia</taxon>
        <taxon>Eutheria</taxon>
        <taxon>Euarchontoglires</taxon>
        <taxon>Glires</taxon>
        <taxon>Rodentia</taxon>
        <taxon>Myomorpha</taxon>
        <taxon>Muroidea</taxon>
        <taxon>Cricetidae</taxon>
        <taxon>Neotominae</taxon>
        <taxon>Peromyscus</taxon>
    </lineage>
</organism>
<evidence type="ECO:0000250" key="1"/>
<evidence type="ECO:0000250" key="2">
    <source>
        <dbReference type="UniProtKB" id="P01375"/>
    </source>
</evidence>
<evidence type="ECO:0000250" key="3">
    <source>
        <dbReference type="UniProtKB" id="P06804"/>
    </source>
</evidence>
<evidence type="ECO:0000255" key="4"/>
<evidence type="ECO:0000255" key="5">
    <source>
        <dbReference type="PROSITE-ProRule" id="PRU01387"/>
    </source>
</evidence>
<evidence type="ECO:0000305" key="6"/>
<protein>
    <recommendedName>
        <fullName>Tumor necrosis factor</fullName>
    </recommendedName>
    <alternativeName>
        <fullName>Cachectin</fullName>
    </alternativeName>
    <alternativeName>
        <fullName>TNF-alpha</fullName>
    </alternativeName>
    <alternativeName>
        <fullName>Tumor necrosis factor ligand superfamily member 2</fullName>
        <shortName>TNF-a</shortName>
    </alternativeName>
    <component>
        <recommendedName>
            <fullName>Tumor necrosis factor, membrane form</fullName>
        </recommendedName>
        <alternativeName>
            <fullName>N-terminal fragment</fullName>
            <shortName>NTF</shortName>
        </alternativeName>
    </component>
    <component>
        <recommendedName>
            <fullName>Intracellular domain 1</fullName>
            <shortName>ICD1</shortName>
        </recommendedName>
    </component>
    <component>
        <recommendedName>
            <fullName>Intracellular domain 2</fullName>
            <shortName>ICD2</shortName>
        </recommendedName>
    </component>
    <component>
        <recommendedName>
            <fullName>C-domain 1</fullName>
        </recommendedName>
    </component>
    <component>
        <recommendedName>
            <fullName>C-domain 2</fullName>
        </recommendedName>
    </component>
    <component>
        <recommendedName>
            <fullName>Tumor necrosis factor, soluble form</fullName>
        </recommendedName>
    </component>
</protein>
<keyword id="KW-1003">Cell membrane</keyword>
<keyword id="KW-0202">Cytokine</keyword>
<keyword id="KW-1015">Disulfide bond</keyword>
<keyword id="KW-0325">Glycoprotein</keyword>
<keyword id="KW-0449">Lipoprotein</keyword>
<keyword id="KW-0472">Membrane</keyword>
<keyword id="KW-0519">Myristate</keyword>
<keyword id="KW-0597">Phosphoprotein</keyword>
<keyword id="KW-0964">Secreted</keyword>
<keyword id="KW-0735">Signal-anchor</keyword>
<keyword id="KW-0812">Transmembrane</keyword>
<keyword id="KW-1133">Transmembrane helix</keyword>
<sequence length="235" mass="25823">MSTESMIRDVELAEEALPKKAWGPQNSSRCLCLSLFSFLLVAGATTLFCLLNFGVIGPQREEKFPNNLPIIGSMAQTLTLRSSSQNSSDKPVAHVVANHQVDEQLEWLSRGANALLANGMDLKDNQLVIPADGLYLVYSQVLFKGQGCSSYVLLTHTVSRFAVSYEDKVNLLSAIKSPCPKETPEGSELKPWYEPIYLGGVFQLEKGDRLSAEVNLPKYLDFAESGQVYFGVIAL</sequence>
<comment type="function">
    <text evidence="2 3">Cytokine that binds to TNFRSF1A/TNFR1 and TNFRSF1B/TNFBR. It is mainly secreted by macrophages and can induce cell death of certain tumor cell lines. It is potent pyrogen causing fever by direct action or by stimulation of interleukin-1 secretion and is implicated in the induction of cachexia, Under certain conditions it can stimulate cell proliferation and induce cell differentiation (By similarity). Induces insulin resistance in adipocytes via inhibition of insulin-induced IRS1 tyrosine phosphorylation and insulin-induced glucose uptake. Induces GKAP42 protein degradation in adipocytes which is partially responsible for TNF-induced insulin resistance (By similarity). Plays a role in angiogenesis by inducing VEGF production synergistically with IL1B and IL6 (By similarity). Promotes osteoclastogenesis and therefore mediates bone resorption (By similarity).</text>
</comment>
<comment type="function">
    <text evidence="2">The TNF intracellular domain (ICD) form induces IL12 production in dendritic cells.</text>
</comment>
<comment type="subunit">
    <text evidence="1">Homotrimer. Interacts with SPPL2B (By similarity).</text>
</comment>
<comment type="subcellular location">
    <subcellularLocation>
        <location evidence="1">Cell membrane</location>
        <topology evidence="1">Single-pass type II membrane protein</topology>
    </subcellularLocation>
</comment>
<comment type="subcellular location">
    <molecule>Tumor necrosis factor, membrane form</molecule>
    <subcellularLocation>
        <location evidence="1">Membrane</location>
        <topology evidence="1">Single-pass type II membrane protein</topology>
    </subcellularLocation>
</comment>
<comment type="subcellular location">
    <molecule>Tumor necrosis factor, soluble form</molecule>
    <subcellularLocation>
        <location evidence="1">Secreted</location>
    </subcellularLocation>
</comment>
<comment type="subcellular location">
    <molecule>C-domain 1</molecule>
    <subcellularLocation>
        <location evidence="1">Secreted</location>
    </subcellularLocation>
</comment>
<comment type="subcellular location">
    <molecule>C-domain 2</molecule>
    <subcellularLocation>
        <location evidence="1">Secreted</location>
    </subcellularLocation>
</comment>
<comment type="PTM">
    <text evidence="1">The soluble form derives from the membrane form by proteolytic processing. The membrane-bound form is further proteolytically processed by SPPL2A or SPPL2B through regulated intramembrane proteolysis producing TNF intracellular domains (ICD1 and ICD2) released in the cytosol and TNF C-domain 1 and C-domain 2 secreted into the extracellular space (By similarity).</text>
</comment>
<comment type="PTM">
    <text evidence="1">The membrane form, but not the soluble form, is phosphorylated on serine residues. Dephosphorylation of the membrane form occurs by binding to soluble TNFRSF1A/TNFR1 (By similarity).</text>
</comment>
<comment type="PTM">
    <text evidence="1">O-glycosylated; glycans contain galactose, N-acetylgalactosamine and N-acetylneuraminic acid.</text>
</comment>
<comment type="PTM">
    <molecule>Tumor necrosis factor, soluble form</molecule>
    <text evidence="2">The soluble form is demyristoylated by SIRT6, promoting its secretion.</text>
</comment>
<comment type="similarity">
    <text evidence="6">Belongs to the tumor necrosis factor family.</text>
</comment>
<reference key="1">
    <citation type="journal article" date="1992" name="Immunogenetics">
        <title>Sequence of the tumor necrosis factor/cachectin (TNF) gene from Peromyscus leucopus (family Cricetidae).</title>
        <authorList>
            <person name="Crew M.D."/>
            <person name="Filipowsky M.E."/>
        </authorList>
    </citation>
    <scope>NUCLEOTIDE SEQUENCE [GENOMIC DNA]</scope>
</reference>
<name>TNFA_PERLE</name>
<feature type="chain" id="PRO_0000034447" description="Tumor necrosis factor, membrane form">
    <location>
        <begin position="1"/>
        <end position="235"/>
    </location>
</feature>
<feature type="chain" id="PRO_0000417279" description="Intracellular domain 1" evidence="1">
    <location>
        <begin position="1"/>
        <end position="39"/>
    </location>
</feature>
<feature type="chain" id="PRO_0000417280" description="Intracellular domain 2" evidence="1">
    <location>
        <begin position="1"/>
        <end position="35"/>
    </location>
</feature>
<feature type="chain" id="PRO_0000417281" description="C-domain 1" evidence="1">
    <location>
        <begin position="50"/>
        <end status="unknown"/>
    </location>
</feature>
<feature type="chain" id="PRO_0000417282" description="C-domain 2" evidence="1">
    <location>
        <begin position="52"/>
        <end status="unknown"/>
    </location>
</feature>
<feature type="chain" id="PRO_0000034448" description="Tumor necrosis factor, soluble form">
    <location>
        <begin position="80"/>
        <end position="235"/>
    </location>
</feature>
<feature type="topological domain" description="Cytoplasmic" evidence="4">
    <location>
        <begin position="1"/>
        <end position="35"/>
    </location>
</feature>
<feature type="transmembrane region" description="Helical; Signal-anchor for type II membrane protein" evidence="4">
    <location>
        <begin position="36"/>
        <end position="56"/>
    </location>
</feature>
<feature type="topological domain" description="Extracellular" evidence="4">
    <location>
        <begin position="57"/>
        <end position="235"/>
    </location>
</feature>
<feature type="domain" description="THD" evidence="5">
    <location>
        <begin position="91"/>
        <end position="235"/>
    </location>
</feature>
<feature type="site" description="Cleavage; by SPPL2A or SPPL2B" evidence="1">
    <location>
        <begin position="34"/>
        <end position="35"/>
    </location>
</feature>
<feature type="site" description="Cleavage; by SPPL2A or SPPL2B" evidence="1">
    <location>
        <begin position="39"/>
        <end position="40"/>
    </location>
</feature>
<feature type="site" description="Cleavage; by SPPL2A or SPPL2B" evidence="1">
    <location>
        <begin position="49"/>
        <end position="50"/>
    </location>
</feature>
<feature type="site" description="Cleavage; by SPPL2A or SPPL2B" evidence="1">
    <location>
        <begin position="51"/>
        <end position="52"/>
    </location>
</feature>
<feature type="site" description="Cleavage; by ADAM17" evidence="1">
    <location>
        <begin position="79"/>
        <end position="80"/>
    </location>
</feature>
<feature type="modified residue" description="Phosphoserine; by CK1" evidence="1">
    <location>
        <position position="2"/>
    </location>
</feature>
<feature type="lipid moiety-binding region" description="N6-myristoyl lysine" evidence="2">
    <location>
        <position position="19"/>
    </location>
</feature>
<feature type="lipid moiety-binding region" description="N6-myristoyl lysine" evidence="2">
    <location>
        <position position="20"/>
    </location>
</feature>
<feature type="glycosylation site" description="O-linked (GalNAc...) serine; in soluble form" evidence="1">
    <location>
        <position position="83"/>
    </location>
</feature>
<feature type="glycosylation site" description="N-linked (GlcNAc...) asparagine" evidence="4">
    <location>
        <position position="86"/>
    </location>
</feature>
<feature type="disulfide bond" evidence="5">
    <location>
        <begin position="148"/>
        <end position="179"/>
    </location>
</feature>